<comment type="function">
    <text evidence="1">Acts as a chaperone for the L4 ribosomal subunit encoded by rpl4A and rpl4B, required for hierarchical ribosome assembly. Shields ribosomal protein L4 until timely release and insertion into the pre-ribosome is possible, once ribosomal protein L18 is present.</text>
</comment>
<comment type="subcellular location">
    <subcellularLocation>
        <location evidence="1">Cytoplasm</location>
    </subcellularLocation>
    <subcellularLocation>
        <location evidence="1">Nucleus</location>
    </subcellularLocation>
    <subcellularLocation>
        <location evidence="3">Nucleus</location>
        <location evidence="3">Nucleolus</location>
    </subcellularLocation>
    <text evidence="1">Distributed throughout the cell but is enriched in the nucleus.</text>
</comment>
<comment type="similarity">
    <text evidence="4">Belongs to the ACL4 family.</text>
</comment>
<proteinExistence type="inferred from homology"/>
<name>ACL4_SCHPO</name>
<feature type="chain" id="PRO_0000351428" description="Probable assembly chaperone of rpl4">
    <location>
        <begin position="1"/>
        <end position="336"/>
    </location>
</feature>
<feature type="repeat" description="TPR 1">
    <location>
        <begin position="39"/>
        <end position="72"/>
    </location>
</feature>
<feature type="repeat" description="TPR 2">
    <location>
        <begin position="75"/>
        <end position="108"/>
    </location>
</feature>
<feature type="repeat" description="TPR 3">
    <location>
        <begin position="110"/>
        <end position="143"/>
    </location>
</feature>
<feature type="repeat" description="TPR 4">
    <location>
        <begin position="162"/>
        <end position="195"/>
    </location>
</feature>
<feature type="region of interest" description="Disordered" evidence="2">
    <location>
        <begin position="316"/>
        <end position="336"/>
    </location>
</feature>
<gene>
    <name evidence="5" type="ORF">SPBC16D10.01c</name>
</gene>
<keyword id="KW-0143">Chaperone</keyword>
<keyword id="KW-0963">Cytoplasm</keyword>
<keyword id="KW-0539">Nucleus</keyword>
<keyword id="KW-1185">Reference proteome</keyword>
<keyword id="KW-0677">Repeat</keyword>
<keyword id="KW-0690">Ribosome biogenesis</keyword>
<keyword id="KW-0802">TPR repeat</keyword>
<protein>
    <recommendedName>
        <fullName evidence="4">Probable assembly chaperone of rpl4</fullName>
    </recommendedName>
</protein>
<evidence type="ECO:0000250" key="1">
    <source>
        <dbReference type="UniProtKB" id="Q03771"/>
    </source>
</evidence>
<evidence type="ECO:0000256" key="2">
    <source>
        <dbReference type="SAM" id="MobiDB-lite"/>
    </source>
</evidence>
<evidence type="ECO:0000269" key="3">
    <source>
    </source>
</evidence>
<evidence type="ECO:0000305" key="4"/>
<evidence type="ECO:0000312" key="5">
    <source>
        <dbReference type="PomBase" id="SPBC16D10.01c"/>
    </source>
</evidence>
<accession>Q1MTN8</accession>
<dbReference type="EMBL" id="CU329671">
    <property type="protein sequence ID" value="CAB51354.2"/>
    <property type="molecule type" value="Genomic_DNA"/>
</dbReference>
<dbReference type="SMR" id="Q1MTN8"/>
<dbReference type="BioGRID" id="276445">
    <property type="interactions" value="8"/>
</dbReference>
<dbReference type="FunCoup" id="Q1MTN8">
    <property type="interactions" value="84"/>
</dbReference>
<dbReference type="STRING" id="284812.Q1MTN8"/>
<dbReference type="iPTMnet" id="Q1MTN8"/>
<dbReference type="PaxDb" id="4896-SPBC16D10.01c.1"/>
<dbReference type="EnsemblFungi" id="SPBC16D10.01c.1">
    <property type="protein sequence ID" value="SPBC16D10.01c.1:pep"/>
    <property type="gene ID" value="SPBC16D10.01c"/>
</dbReference>
<dbReference type="KEGG" id="spo:2539899"/>
<dbReference type="PomBase" id="SPBC16D10.01c"/>
<dbReference type="VEuPathDB" id="FungiDB:SPBC16D10.01c"/>
<dbReference type="eggNOG" id="ENOG502QSAH">
    <property type="taxonomic scope" value="Eukaryota"/>
</dbReference>
<dbReference type="HOGENOM" id="CLU_040959_2_0_1"/>
<dbReference type="InParanoid" id="Q1MTN8"/>
<dbReference type="OMA" id="ETYMTDL"/>
<dbReference type="PhylomeDB" id="Q1MTN8"/>
<dbReference type="PRO" id="PR:Q1MTN8"/>
<dbReference type="Proteomes" id="UP000002485">
    <property type="component" value="Chromosome II"/>
</dbReference>
<dbReference type="GO" id="GO:0005737">
    <property type="term" value="C:cytoplasm"/>
    <property type="evidence" value="ECO:0007669"/>
    <property type="project" value="UniProtKB-SubCell"/>
</dbReference>
<dbReference type="GO" id="GO:0005730">
    <property type="term" value="C:nucleolus"/>
    <property type="evidence" value="ECO:0007005"/>
    <property type="project" value="PomBase"/>
</dbReference>
<dbReference type="GO" id="GO:0005634">
    <property type="term" value="C:nucleus"/>
    <property type="evidence" value="ECO:0007005"/>
    <property type="project" value="PomBase"/>
</dbReference>
<dbReference type="GO" id="GO:0140597">
    <property type="term" value="F:protein carrier chaperone"/>
    <property type="evidence" value="ECO:0000266"/>
    <property type="project" value="PomBase"/>
</dbReference>
<dbReference type="GO" id="GO:0180023">
    <property type="term" value="P:cytosolic large ribosomal subunit assembly"/>
    <property type="evidence" value="ECO:0000266"/>
    <property type="project" value="PomBase"/>
</dbReference>
<dbReference type="CDD" id="cd24142">
    <property type="entry name" value="ACL4-like"/>
    <property type="match status" value="1"/>
</dbReference>
<dbReference type="Gene3D" id="1.25.40.10">
    <property type="entry name" value="Tetratricopeptide repeat domain"/>
    <property type="match status" value="2"/>
</dbReference>
<dbReference type="InterPro" id="IPR011990">
    <property type="entry name" value="TPR-like_helical_dom_sf"/>
</dbReference>
<dbReference type="InterPro" id="IPR019734">
    <property type="entry name" value="TPR_rpt"/>
</dbReference>
<dbReference type="Pfam" id="PF13181">
    <property type="entry name" value="TPR_8"/>
    <property type="match status" value="1"/>
</dbReference>
<dbReference type="SUPFAM" id="SSF48452">
    <property type="entry name" value="TPR-like"/>
    <property type="match status" value="1"/>
</dbReference>
<dbReference type="PROSITE" id="PS50005">
    <property type="entry name" value="TPR"/>
    <property type="match status" value="2"/>
</dbReference>
<dbReference type="PROSITE" id="PS50293">
    <property type="entry name" value="TPR_REGION"/>
    <property type="match status" value="1"/>
</dbReference>
<sequence length="336" mass="38108">MSVTDAELLEIREKLVKDETSEALILAKKAADKSPKEDGRAFELLGEVYAELADVKKARSAFKEAVSRSKNLTNDQGYEKYLWLAQINDNGSKALKLYQKGVTILERLLIDKGEDADLKKKIQGAYCSIAELFMTDLCMQPDAEENCELYTKLALQIDATNAEALQTLASMRISQQKIEEAKDALSKCLQSISRAATEDSVDLPTYAVRTSIVRLLIEVEMHEEAHQLLVYLQKEDDQILDIWYLLGWNCYVEAQNLQEQGNGSEEEIKELLMNAKFYFISALGVYQKIGWDDEGIKSHIQELLEILNGLGVPNMDEENEEAEWETSENEEEMDED</sequence>
<organism>
    <name type="scientific">Schizosaccharomyces pombe (strain 972 / ATCC 24843)</name>
    <name type="common">Fission yeast</name>
    <dbReference type="NCBI Taxonomy" id="284812"/>
    <lineage>
        <taxon>Eukaryota</taxon>
        <taxon>Fungi</taxon>
        <taxon>Dikarya</taxon>
        <taxon>Ascomycota</taxon>
        <taxon>Taphrinomycotina</taxon>
        <taxon>Schizosaccharomycetes</taxon>
        <taxon>Schizosaccharomycetales</taxon>
        <taxon>Schizosaccharomycetaceae</taxon>
        <taxon>Schizosaccharomyces</taxon>
    </lineage>
</organism>
<reference key="1">
    <citation type="journal article" date="2002" name="Nature">
        <title>The genome sequence of Schizosaccharomyces pombe.</title>
        <authorList>
            <person name="Wood V."/>
            <person name="Gwilliam R."/>
            <person name="Rajandream M.A."/>
            <person name="Lyne M.H."/>
            <person name="Lyne R."/>
            <person name="Stewart A."/>
            <person name="Sgouros J.G."/>
            <person name="Peat N."/>
            <person name="Hayles J."/>
            <person name="Baker S.G."/>
            <person name="Basham D."/>
            <person name="Bowman S."/>
            <person name="Brooks K."/>
            <person name="Brown D."/>
            <person name="Brown S."/>
            <person name="Chillingworth T."/>
            <person name="Churcher C.M."/>
            <person name="Collins M."/>
            <person name="Connor R."/>
            <person name="Cronin A."/>
            <person name="Davis P."/>
            <person name="Feltwell T."/>
            <person name="Fraser A."/>
            <person name="Gentles S."/>
            <person name="Goble A."/>
            <person name="Hamlin N."/>
            <person name="Harris D.E."/>
            <person name="Hidalgo J."/>
            <person name="Hodgson G."/>
            <person name="Holroyd S."/>
            <person name="Hornsby T."/>
            <person name="Howarth S."/>
            <person name="Huckle E.J."/>
            <person name="Hunt S."/>
            <person name="Jagels K."/>
            <person name="James K.D."/>
            <person name="Jones L."/>
            <person name="Jones M."/>
            <person name="Leather S."/>
            <person name="McDonald S."/>
            <person name="McLean J."/>
            <person name="Mooney P."/>
            <person name="Moule S."/>
            <person name="Mungall K.L."/>
            <person name="Murphy L.D."/>
            <person name="Niblett D."/>
            <person name="Odell C."/>
            <person name="Oliver K."/>
            <person name="O'Neil S."/>
            <person name="Pearson D."/>
            <person name="Quail M.A."/>
            <person name="Rabbinowitsch E."/>
            <person name="Rutherford K.M."/>
            <person name="Rutter S."/>
            <person name="Saunders D."/>
            <person name="Seeger K."/>
            <person name="Sharp S."/>
            <person name="Skelton J."/>
            <person name="Simmonds M.N."/>
            <person name="Squares R."/>
            <person name="Squares S."/>
            <person name="Stevens K."/>
            <person name="Taylor K."/>
            <person name="Taylor R.G."/>
            <person name="Tivey A."/>
            <person name="Walsh S.V."/>
            <person name="Warren T."/>
            <person name="Whitehead S."/>
            <person name="Woodward J.R."/>
            <person name="Volckaert G."/>
            <person name="Aert R."/>
            <person name="Robben J."/>
            <person name="Grymonprez B."/>
            <person name="Weltjens I."/>
            <person name="Vanstreels E."/>
            <person name="Rieger M."/>
            <person name="Schaefer M."/>
            <person name="Mueller-Auer S."/>
            <person name="Gabel C."/>
            <person name="Fuchs M."/>
            <person name="Duesterhoeft A."/>
            <person name="Fritzc C."/>
            <person name="Holzer E."/>
            <person name="Moestl D."/>
            <person name="Hilbert H."/>
            <person name="Borzym K."/>
            <person name="Langer I."/>
            <person name="Beck A."/>
            <person name="Lehrach H."/>
            <person name="Reinhardt R."/>
            <person name="Pohl T.M."/>
            <person name="Eger P."/>
            <person name="Zimmermann W."/>
            <person name="Wedler H."/>
            <person name="Wambutt R."/>
            <person name="Purnelle B."/>
            <person name="Goffeau A."/>
            <person name="Cadieu E."/>
            <person name="Dreano S."/>
            <person name="Gloux S."/>
            <person name="Lelaure V."/>
            <person name="Mottier S."/>
            <person name="Galibert F."/>
            <person name="Aves S.J."/>
            <person name="Xiang Z."/>
            <person name="Hunt C."/>
            <person name="Moore K."/>
            <person name="Hurst S.M."/>
            <person name="Lucas M."/>
            <person name="Rochet M."/>
            <person name="Gaillardin C."/>
            <person name="Tallada V.A."/>
            <person name="Garzon A."/>
            <person name="Thode G."/>
            <person name="Daga R.R."/>
            <person name="Cruzado L."/>
            <person name="Jimenez J."/>
            <person name="Sanchez M."/>
            <person name="del Rey F."/>
            <person name="Benito J."/>
            <person name="Dominguez A."/>
            <person name="Revuelta J.L."/>
            <person name="Moreno S."/>
            <person name="Armstrong J."/>
            <person name="Forsburg S.L."/>
            <person name="Cerutti L."/>
            <person name="Lowe T."/>
            <person name="McCombie W.R."/>
            <person name="Paulsen I."/>
            <person name="Potashkin J."/>
            <person name="Shpakovski G.V."/>
            <person name="Ussery D."/>
            <person name="Barrell B.G."/>
            <person name="Nurse P."/>
        </authorList>
    </citation>
    <scope>NUCLEOTIDE SEQUENCE [LARGE SCALE GENOMIC DNA]</scope>
    <source>
        <strain>972 / ATCC 24843</strain>
    </source>
</reference>
<reference key="2">
    <citation type="journal article" date="2006" name="Nat. Biotechnol.">
        <title>ORFeome cloning and global analysis of protein localization in the fission yeast Schizosaccharomyces pombe.</title>
        <authorList>
            <person name="Matsuyama A."/>
            <person name="Arai R."/>
            <person name="Yashiroda Y."/>
            <person name="Shirai A."/>
            <person name="Kamata A."/>
            <person name="Sekido S."/>
            <person name="Kobayashi Y."/>
            <person name="Hashimoto A."/>
            <person name="Hamamoto M."/>
            <person name="Hiraoka Y."/>
            <person name="Horinouchi S."/>
            <person name="Yoshida M."/>
        </authorList>
    </citation>
    <scope>SUBCELLULAR LOCATION [LARGE SCALE ANALYSIS]</scope>
</reference>